<organism>
    <name type="scientific">Campylobacter lari (strain RM2100 / D67 / ATCC BAA-1060)</name>
    <dbReference type="NCBI Taxonomy" id="306263"/>
    <lineage>
        <taxon>Bacteria</taxon>
        <taxon>Pseudomonadati</taxon>
        <taxon>Campylobacterota</taxon>
        <taxon>Epsilonproteobacteria</taxon>
        <taxon>Campylobacterales</taxon>
        <taxon>Campylobacteraceae</taxon>
        <taxon>Campylobacter</taxon>
    </lineage>
</organism>
<gene>
    <name evidence="1" type="primary">hisS</name>
    <name type="ordered locus">Cla_0745</name>
</gene>
<feature type="chain" id="PRO_1000199119" description="Histidine--tRNA ligase">
    <location>
        <begin position="1"/>
        <end position="408"/>
    </location>
</feature>
<reference key="1">
    <citation type="journal article" date="2008" name="Foodborne Pathog. Dis.">
        <title>The complete genome sequence and analysis of the human pathogen Campylobacter lari.</title>
        <authorList>
            <person name="Miller W.G."/>
            <person name="Wang G."/>
            <person name="Binnewies T.T."/>
            <person name="Parker C.T."/>
        </authorList>
    </citation>
    <scope>NUCLEOTIDE SEQUENCE [LARGE SCALE GENOMIC DNA]</scope>
    <source>
        <strain>RM2100 / D67 / ATCC BAA-1060</strain>
    </source>
</reference>
<keyword id="KW-0030">Aminoacyl-tRNA synthetase</keyword>
<keyword id="KW-0067">ATP-binding</keyword>
<keyword id="KW-0963">Cytoplasm</keyword>
<keyword id="KW-0436">Ligase</keyword>
<keyword id="KW-0547">Nucleotide-binding</keyword>
<keyword id="KW-0648">Protein biosynthesis</keyword>
<keyword id="KW-1185">Reference proteome</keyword>
<name>SYH_CAMLR</name>
<dbReference type="EC" id="6.1.1.21" evidence="1"/>
<dbReference type="EMBL" id="CP000932">
    <property type="protein sequence ID" value="ACM64073.1"/>
    <property type="molecule type" value="Genomic_DNA"/>
</dbReference>
<dbReference type="RefSeq" id="WP_012661456.1">
    <property type="nucleotide sequence ID" value="NC_012039.1"/>
</dbReference>
<dbReference type="SMR" id="B9KG88"/>
<dbReference type="STRING" id="306263.Cla_0745"/>
<dbReference type="KEGG" id="cla:CLA_0745"/>
<dbReference type="PATRIC" id="fig|306263.5.peg.725"/>
<dbReference type="eggNOG" id="COG0124">
    <property type="taxonomic scope" value="Bacteria"/>
</dbReference>
<dbReference type="HOGENOM" id="CLU_025113_1_1_7"/>
<dbReference type="Proteomes" id="UP000007727">
    <property type="component" value="Chromosome"/>
</dbReference>
<dbReference type="GO" id="GO:0005737">
    <property type="term" value="C:cytoplasm"/>
    <property type="evidence" value="ECO:0007669"/>
    <property type="project" value="UniProtKB-SubCell"/>
</dbReference>
<dbReference type="GO" id="GO:0005524">
    <property type="term" value="F:ATP binding"/>
    <property type="evidence" value="ECO:0007669"/>
    <property type="project" value="UniProtKB-UniRule"/>
</dbReference>
<dbReference type="GO" id="GO:0004821">
    <property type="term" value="F:histidine-tRNA ligase activity"/>
    <property type="evidence" value="ECO:0007669"/>
    <property type="project" value="UniProtKB-UniRule"/>
</dbReference>
<dbReference type="GO" id="GO:0006427">
    <property type="term" value="P:histidyl-tRNA aminoacylation"/>
    <property type="evidence" value="ECO:0007669"/>
    <property type="project" value="UniProtKB-UniRule"/>
</dbReference>
<dbReference type="CDD" id="cd00773">
    <property type="entry name" value="HisRS-like_core"/>
    <property type="match status" value="1"/>
</dbReference>
<dbReference type="Gene3D" id="3.40.50.800">
    <property type="entry name" value="Anticodon-binding domain"/>
    <property type="match status" value="1"/>
</dbReference>
<dbReference type="Gene3D" id="3.30.930.10">
    <property type="entry name" value="Bira Bifunctional Protein, Domain 2"/>
    <property type="match status" value="1"/>
</dbReference>
<dbReference type="HAMAP" id="MF_00127">
    <property type="entry name" value="His_tRNA_synth"/>
    <property type="match status" value="1"/>
</dbReference>
<dbReference type="InterPro" id="IPR006195">
    <property type="entry name" value="aa-tRNA-synth_II"/>
</dbReference>
<dbReference type="InterPro" id="IPR045864">
    <property type="entry name" value="aa-tRNA-synth_II/BPL/LPL"/>
</dbReference>
<dbReference type="InterPro" id="IPR004154">
    <property type="entry name" value="Anticodon-bd"/>
</dbReference>
<dbReference type="InterPro" id="IPR036621">
    <property type="entry name" value="Anticodon-bd_dom_sf"/>
</dbReference>
<dbReference type="InterPro" id="IPR015807">
    <property type="entry name" value="His-tRNA-ligase"/>
</dbReference>
<dbReference type="InterPro" id="IPR041715">
    <property type="entry name" value="HisRS-like_core"/>
</dbReference>
<dbReference type="InterPro" id="IPR004516">
    <property type="entry name" value="HisRS/HisZ"/>
</dbReference>
<dbReference type="NCBIfam" id="TIGR00442">
    <property type="entry name" value="hisS"/>
    <property type="match status" value="1"/>
</dbReference>
<dbReference type="PANTHER" id="PTHR43707:SF1">
    <property type="entry name" value="HISTIDINE--TRNA LIGASE, MITOCHONDRIAL-RELATED"/>
    <property type="match status" value="1"/>
</dbReference>
<dbReference type="PANTHER" id="PTHR43707">
    <property type="entry name" value="HISTIDYL-TRNA SYNTHETASE"/>
    <property type="match status" value="1"/>
</dbReference>
<dbReference type="Pfam" id="PF03129">
    <property type="entry name" value="HGTP_anticodon"/>
    <property type="match status" value="1"/>
</dbReference>
<dbReference type="Pfam" id="PF13393">
    <property type="entry name" value="tRNA-synt_His"/>
    <property type="match status" value="1"/>
</dbReference>
<dbReference type="PIRSF" id="PIRSF001549">
    <property type="entry name" value="His-tRNA_synth"/>
    <property type="match status" value="1"/>
</dbReference>
<dbReference type="SUPFAM" id="SSF52954">
    <property type="entry name" value="Class II aaRS ABD-related"/>
    <property type="match status" value="1"/>
</dbReference>
<dbReference type="SUPFAM" id="SSF55681">
    <property type="entry name" value="Class II aaRS and biotin synthetases"/>
    <property type="match status" value="1"/>
</dbReference>
<dbReference type="PROSITE" id="PS50862">
    <property type="entry name" value="AA_TRNA_LIGASE_II"/>
    <property type="match status" value="1"/>
</dbReference>
<accession>B9KG88</accession>
<evidence type="ECO:0000255" key="1">
    <source>
        <dbReference type="HAMAP-Rule" id="MF_00127"/>
    </source>
</evidence>
<proteinExistence type="inferred from homology"/>
<protein>
    <recommendedName>
        <fullName evidence="1">Histidine--tRNA ligase</fullName>
        <ecNumber evidence="1">6.1.1.21</ecNumber>
    </recommendedName>
    <alternativeName>
        <fullName evidence="1">Histidyl-tRNA synthetase</fullName>
        <shortName evidence="1">HisRS</shortName>
    </alternativeName>
</protein>
<comment type="catalytic activity">
    <reaction evidence="1">
        <text>tRNA(His) + L-histidine + ATP = L-histidyl-tRNA(His) + AMP + diphosphate + H(+)</text>
        <dbReference type="Rhea" id="RHEA:17313"/>
        <dbReference type="Rhea" id="RHEA-COMP:9665"/>
        <dbReference type="Rhea" id="RHEA-COMP:9689"/>
        <dbReference type="ChEBI" id="CHEBI:15378"/>
        <dbReference type="ChEBI" id="CHEBI:30616"/>
        <dbReference type="ChEBI" id="CHEBI:33019"/>
        <dbReference type="ChEBI" id="CHEBI:57595"/>
        <dbReference type="ChEBI" id="CHEBI:78442"/>
        <dbReference type="ChEBI" id="CHEBI:78527"/>
        <dbReference type="ChEBI" id="CHEBI:456215"/>
        <dbReference type="EC" id="6.1.1.21"/>
    </reaction>
</comment>
<comment type="subunit">
    <text evidence="1">Homodimer.</text>
</comment>
<comment type="subcellular location">
    <subcellularLocation>
        <location evidence="1">Cytoplasm</location>
    </subcellularLocation>
</comment>
<comment type="similarity">
    <text evidence="1">Belongs to the class-II aminoacyl-tRNA synthetase family.</text>
</comment>
<sequence length="408" mass="46918">MINALKGMKDLQDDQATLYEKVVKTCEEVAKNYGFTFINCPHLELTKLFKRSVGESSDIVGKEMYEFVDKAGNDVCLRPEGTAGVVRSYIEAKMDKNQSVKRWFYHGSMFRYERPQKGRLREFHQFGVESFGVESVYEDASIILMLDEIFKRLKIHTNLKINSLGCKECMGVYKEKLIAFLNSKDGFCEDCLRRKELNPIRVLDCKNDHCQNLIKNAPKLSENLCPCCKKDYEKLQKILSENGIEFECDEKLVRGLDYYSKSAFEFISDEIGAKAAVAGGGRYDRLIEYLDGKSGYGVGFAMGIERIMAILEQKQDIKKRNGIYLCAMDEAYIDTIFKLANTLRKKHKVYLSYEAKKLAKHLNQADNANAKIFLCIGEDEMQKEEIFYKNLDTKENKNIKIANLENEL</sequence>